<feature type="chain" id="PRO_0000310316" description="Putative aryl-alcohol dehydrogenase C977.14c">
    <location>
        <begin position="1"/>
        <end position="351"/>
    </location>
</feature>
<feature type="modified residue" description="Phosphoserine" evidence="2">
    <location>
        <position position="113"/>
    </location>
</feature>
<gene>
    <name type="ORF">SPAC977.14c</name>
</gene>
<evidence type="ECO:0000269" key="1">
    <source>
    </source>
</evidence>
<evidence type="ECO:0000269" key="2">
    <source>
    </source>
</evidence>
<evidence type="ECO:0000305" key="3"/>
<sequence>MSSLSPELYGCLGNSGLKVSKLILGCMSYGKKEYWEDWVLEDEEEVFKIMKAAYDAGIRTFDTANCYSAGVSEELVGKFIRKYEIPRSSIVILSKCFFPVRKDLIKIFGDLSSRGVHFLDSPELANQCGLSRKHIFDAVEDSVKRLGTYIDVLQIHRYDPHVSAEEVMRALNDVVESGKVRYIGASTMRCYQFIELQNTAEKHGWHKFISMQNYHNLLYREEEREMIPYCQKTGVGLIPWSPLARGLLTRSIDANEETIRSKTDLYTRALEFGAGYKAILSRVEELAKKYNVSMATLATAWSLHKGDYPIVGISKVERLKDALAAVELKLSEEDIKYLEEPYCPVPIQGEI</sequence>
<name>YI7E_SCHPO</name>
<accession>Q9P7U2</accession>
<organism>
    <name type="scientific">Schizosaccharomyces pombe (strain 972 / ATCC 24843)</name>
    <name type="common">Fission yeast</name>
    <dbReference type="NCBI Taxonomy" id="284812"/>
    <lineage>
        <taxon>Eukaryota</taxon>
        <taxon>Fungi</taxon>
        <taxon>Dikarya</taxon>
        <taxon>Ascomycota</taxon>
        <taxon>Taphrinomycotina</taxon>
        <taxon>Schizosaccharomycetes</taxon>
        <taxon>Schizosaccharomycetales</taxon>
        <taxon>Schizosaccharomycetaceae</taxon>
        <taxon>Schizosaccharomyces</taxon>
    </lineage>
</organism>
<dbReference type="EC" id="1.1.1.-"/>
<dbReference type="EMBL" id="CU329670">
    <property type="protein sequence ID" value="CAB69636.1"/>
    <property type="molecule type" value="Genomic_DNA"/>
</dbReference>
<dbReference type="PIR" id="T50285">
    <property type="entry name" value="T50285"/>
</dbReference>
<dbReference type="RefSeq" id="NP_592785.1">
    <property type="nucleotide sequence ID" value="NM_001018185.2"/>
</dbReference>
<dbReference type="SMR" id="Q9P7U2"/>
<dbReference type="BioGRID" id="279748">
    <property type="interactions" value="5"/>
</dbReference>
<dbReference type="FunCoup" id="Q9P7U2">
    <property type="interactions" value="26"/>
</dbReference>
<dbReference type="STRING" id="284812.Q9P7U2"/>
<dbReference type="iPTMnet" id="Q9P7U2"/>
<dbReference type="PaxDb" id="4896-SPAC977.14c.1"/>
<dbReference type="EnsemblFungi" id="SPAC977.14c.1">
    <property type="protein sequence ID" value="SPAC977.14c.1:pep"/>
    <property type="gene ID" value="SPAC977.14c"/>
</dbReference>
<dbReference type="KEGG" id="spo:2543325"/>
<dbReference type="PomBase" id="SPAC977.14c"/>
<dbReference type="VEuPathDB" id="FungiDB:SPAC977.14c"/>
<dbReference type="eggNOG" id="KOG1575">
    <property type="taxonomic scope" value="Eukaryota"/>
</dbReference>
<dbReference type="HOGENOM" id="CLU_023205_2_0_1"/>
<dbReference type="InParanoid" id="Q9P7U2"/>
<dbReference type="OMA" id="RPDYNTD"/>
<dbReference type="PhylomeDB" id="Q9P7U2"/>
<dbReference type="PRO" id="PR:Q9P7U2"/>
<dbReference type="Proteomes" id="UP000002485">
    <property type="component" value="Chromosome I"/>
</dbReference>
<dbReference type="GO" id="GO:0005829">
    <property type="term" value="C:cytosol"/>
    <property type="evidence" value="ECO:0007005"/>
    <property type="project" value="PomBase"/>
</dbReference>
<dbReference type="GO" id="GO:0005634">
    <property type="term" value="C:nucleus"/>
    <property type="evidence" value="ECO:0007005"/>
    <property type="project" value="PomBase"/>
</dbReference>
<dbReference type="GO" id="GO:0016491">
    <property type="term" value="F:oxidoreductase activity"/>
    <property type="evidence" value="ECO:0000255"/>
    <property type="project" value="PomBase"/>
</dbReference>
<dbReference type="GO" id="GO:0071805">
    <property type="term" value="P:potassium ion transmembrane transport"/>
    <property type="evidence" value="ECO:0000266"/>
    <property type="project" value="PomBase"/>
</dbReference>
<dbReference type="CDD" id="cd19079">
    <property type="entry name" value="AKR_EcYajO-like"/>
    <property type="match status" value="1"/>
</dbReference>
<dbReference type="FunFam" id="3.20.20.100:FF:000004">
    <property type="entry name" value="Oxidoreductase, aldo/keto reductase"/>
    <property type="match status" value="1"/>
</dbReference>
<dbReference type="Gene3D" id="3.20.20.100">
    <property type="entry name" value="NADP-dependent oxidoreductase domain"/>
    <property type="match status" value="1"/>
</dbReference>
<dbReference type="InterPro" id="IPR050523">
    <property type="entry name" value="AKR_Detox_Biosynth"/>
</dbReference>
<dbReference type="InterPro" id="IPR023210">
    <property type="entry name" value="NADP_OxRdtase_dom"/>
</dbReference>
<dbReference type="InterPro" id="IPR036812">
    <property type="entry name" value="NADP_OxRdtase_dom_sf"/>
</dbReference>
<dbReference type="PANTHER" id="PTHR43364:SF15">
    <property type="entry name" value="ARYL-ALCOHOL DEHYDROGENASE AAD16-RELATED"/>
    <property type="match status" value="1"/>
</dbReference>
<dbReference type="PANTHER" id="PTHR43364">
    <property type="entry name" value="NADH-SPECIFIC METHYLGLYOXAL REDUCTASE-RELATED"/>
    <property type="match status" value="1"/>
</dbReference>
<dbReference type="Pfam" id="PF00248">
    <property type="entry name" value="Aldo_ket_red"/>
    <property type="match status" value="1"/>
</dbReference>
<dbReference type="SUPFAM" id="SSF51430">
    <property type="entry name" value="NAD(P)-linked oxidoreductase"/>
    <property type="match status" value="1"/>
</dbReference>
<keyword id="KW-0963">Cytoplasm</keyword>
<keyword id="KW-0539">Nucleus</keyword>
<keyword id="KW-0560">Oxidoreductase</keyword>
<keyword id="KW-0597">Phosphoprotein</keyword>
<keyword id="KW-1185">Reference proteome</keyword>
<proteinExistence type="evidence at protein level"/>
<protein>
    <recommendedName>
        <fullName>Putative aryl-alcohol dehydrogenase C977.14c</fullName>
        <ecNumber>1.1.1.-</ecNumber>
    </recommendedName>
</protein>
<reference key="1">
    <citation type="journal article" date="2002" name="Nature">
        <title>The genome sequence of Schizosaccharomyces pombe.</title>
        <authorList>
            <person name="Wood V."/>
            <person name="Gwilliam R."/>
            <person name="Rajandream M.A."/>
            <person name="Lyne M.H."/>
            <person name="Lyne R."/>
            <person name="Stewart A."/>
            <person name="Sgouros J.G."/>
            <person name="Peat N."/>
            <person name="Hayles J."/>
            <person name="Baker S.G."/>
            <person name="Basham D."/>
            <person name="Bowman S."/>
            <person name="Brooks K."/>
            <person name="Brown D."/>
            <person name="Brown S."/>
            <person name="Chillingworth T."/>
            <person name="Churcher C.M."/>
            <person name="Collins M."/>
            <person name="Connor R."/>
            <person name="Cronin A."/>
            <person name="Davis P."/>
            <person name="Feltwell T."/>
            <person name="Fraser A."/>
            <person name="Gentles S."/>
            <person name="Goble A."/>
            <person name="Hamlin N."/>
            <person name="Harris D.E."/>
            <person name="Hidalgo J."/>
            <person name="Hodgson G."/>
            <person name="Holroyd S."/>
            <person name="Hornsby T."/>
            <person name="Howarth S."/>
            <person name="Huckle E.J."/>
            <person name="Hunt S."/>
            <person name="Jagels K."/>
            <person name="James K.D."/>
            <person name="Jones L."/>
            <person name="Jones M."/>
            <person name="Leather S."/>
            <person name="McDonald S."/>
            <person name="McLean J."/>
            <person name="Mooney P."/>
            <person name="Moule S."/>
            <person name="Mungall K.L."/>
            <person name="Murphy L.D."/>
            <person name="Niblett D."/>
            <person name="Odell C."/>
            <person name="Oliver K."/>
            <person name="O'Neil S."/>
            <person name="Pearson D."/>
            <person name="Quail M.A."/>
            <person name="Rabbinowitsch E."/>
            <person name="Rutherford K.M."/>
            <person name="Rutter S."/>
            <person name="Saunders D."/>
            <person name="Seeger K."/>
            <person name="Sharp S."/>
            <person name="Skelton J."/>
            <person name="Simmonds M.N."/>
            <person name="Squares R."/>
            <person name="Squares S."/>
            <person name="Stevens K."/>
            <person name="Taylor K."/>
            <person name="Taylor R.G."/>
            <person name="Tivey A."/>
            <person name="Walsh S.V."/>
            <person name="Warren T."/>
            <person name="Whitehead S."/>
            <person name="Woodward J.R."/>
            <person name="Volckaert G."/>
            <person name="Aert R."/>
            <person name="Robben J."/>
            <person name="Grymonprez B."/>
            <person name="Weltjens I."/>
            <person name="Vanstreels E."/>
            <person name="Rieger M."/>
            <person name="Schaefer M."/>
            <person name="Mueller-Auer S."/>
            <person name="Gabel C."/>
            <person name="Fuchs M."/>
            <person name="Duesterhoeft A."/>
            <person name="Fritzc C."/>
            <person name="Holzer E."/>
            <person name="Moestl D."/>
            <person name="Hilbert H."/>
            <person name="Borzym K."/>
            <person name="Langer I."/>
            <person name="Beck A."/>
            <person name="Lehrach H."/>
            <person name="Reinhardt R."/>
            <person name="Pohl T.M."/>
            <person name="Eger P."/>
            <person name="Zimmermann W."/>
            <person name="Wedler H."/>
            <person name="Wambutt R."/>
            <person name="Purnelle B."/>
            <person name="Goffeau A."/>
            <person name="Cadieu E."/>
            <person name="Dreano S."/>
            <person name="Gloux S."/>
            <person name="Lelaure V."/>
            <person name="Mottier S."/>
            <person name="Galibert F."/>
            <person name="Aves S.J."/>
            <person name="Xiang Z."/>
            <person name="Hunt C."/>
            <person name="Moore K."/>
            <person name="Hurst S.M."/>
            <person name="Lucas M."/>
            <person name="Rochet M."/>
            <person name="Gaillardin C."/>
            <person name="Tallada V.A."/>
            <person name="Garzon A."/>
            <person name="Thode G."/>
            <person name="Daga R.R."/>
            <person name="Cruzado L."/>
            <person name="Jimenez J."/>
            <person name="Sanchez M."/>
            <person name="del Rey F."/>
            <person name="Benito J."/>
            <person name="Dominguez A."/>
            <person name="Revuelta J.L."/>
            <person name="Moreno S."/>
            <person name="Armstrong J."/>
            <person name="Forsburg S.L."/>
            <person name="Cerutti L."/>
            <person name="Lowe T."/>
            <person name="McCombie W.R."/>
            <person name="Paulsen I."/>
            <person name="Potashkin J."/>
            <person name="Shpakovski G.V."/>
            <person name="Ussery D."/>
            <person name="Barrell B.G."/>
            <person name="Nurse P."/>
        </authorList>
    </citation>
    <scope>NUCLEOTIDE SEQUENCE [LARGE SCALE GENOMIC DNA]</scope>
    <source>
        <strain>972 / ATCC 24843</strain>
    </source>
</reference>
<reference key="2">
    <citation type="journal article" date="2006" name="Nat. Biotechnol.">
        <title>ORFeome cloning and global analysis of protein localization in the fission yeast Schizosaccharomyces pombe.</title>
        <authorList>
            <person name="Matsuyama A."/>
            <person name="Arai R."/>
            <person name="Yashiroda Y."/>
            <person name="Shirai A."/>
            <person name="Kamata A."/>
            <person name="Sekido S."/>
            <person name="Kobayashi Y."/>
            <person name="Hashimoto A."/>
            <person name="Hamamoto M."/>
            <person name="Hiraoka Y."/>
            <person name="Horinouchi S."/>
            <person name="Yoshida M."/>
        </authorList>
    </citation>
    <scope>SUBCELLULAR LOCATION [LARGE SCALE ANALYSIS]</scope>
</reference>
<reference key="3">
    <citation type="journal article" date="2008" name="J. Proteome Res.">
        <title>Phosphoproteome analysis of fission yeast.</title>
        <authorList>
            <person name="Wilson-Grady J.T."/>
            <person name="Villen J."/>
            <person name="Gygi S.P."/>
        </authorList>
    </citation>
    <scope>PHOSPHORYLATION [LARGE SCALE ANALYSIS] AT SER-113</scope>
    <scope>IDENTIFICATION BY MASS SPECTROMETRY</scope>
</reference>
<comment type="subcellular location">
    <subcellularLocation>
        <location evidence="1">Cytoplasm</location>
    </subcellularLocation>
    <subcellularLocation>
        <location evidence="1">Nucleus</location>
    </subcellularLocation>
</comment>
<comment type="similarity">
    <text evidence="3">Belongs to the aldo/keto reductase family. Aldo/keto reductase 2 subfamily.</text>
</comment>